<keyword id="KW-0997">Cell inner membrane</keyword>
<keyword id="KW-1003">Cell membrane</keyword>
<keyword id="KW-0406">Ion transport</keyword>
<keyword id="KW-0472">Membrane</keyword>
<keyword id="KW-0630">Potassium</keyword>
<keyword id="KW-0633">Potassium transport</keyword>
<keyword id="KW-1185">Reference proteome</keyword>
<keyword id="KW-0769">Symport</keyword>
<keyword id="KW-0812">Transmembrane</keyword>
<keyword id="KW-1133">Transmembrane helix</keyword>
<keyword id="KW-0813">Transport</keyword>
<organism>
    <name type="scientific">Xanthomonas campestris pv. campestris (strain ATCC 33913 / DSM 3586 / NCPPB 528 / LMG 568 / P 25)</name>
    <dbReference type="NCBI Taxonomy" id="190485"/>
    <lineage>
        <taxon>Bacteria</taxon>
        <taxon>Pseudomonadati</taxon>
        <taxon>Pseudomonadota</taxon>
        <taxon>Gammaproteobacteria</taxon>
        <taxon>Lysobacterales</taxon>
        <taxon>Lysobacteraceae</taxon>
        <taxon>Xanthomonas</taxon>
    </lineage>
</organism>
<gene>
    <name evidence="1" type="primary">kup</name>
    <name type="ordered locus">XCC3024</name>
</gene>
<evidence type="ECO:0000255" key="1">
    <source>
        <dbReference type="HAMAP-Rule" id="MF_01522"/>
    </source>
</evidence>
<dbReference type="EMBL" id="AE008922">
    <property type="protein sequence ID" value="AAM42295.1"/>
    <property type="molecule type" value="Genomic_DNA"/>
</dbReference>
<dbReference type="RefSeq" id="NP_638371.1">
    <property type="nucleotide sequence ID" value="NC_003902.1"/>
</dbReference>
<dbReference type="RefSeq" id="WP_011038140.1">
    <property type="nucleotide sequence ID" value="NC_003902.1"/>
</dbReference>
<dbReference type="SMR" id="Q8P6E6"/>
<dbReference type="STRING" id="190485.XCC3024"/>
<dbReference type="EnsemblBacteria" id="AAM42295">
    <property type="protein sequence ID" value="AAM42295"/>
    <property type="gene ID" value="XCC3024"/>
</dbReference>
<dbReference type="KEGG" id="xcc:XCC3024"/>
<dbReference type="PATRIC" id="fig|190485.4.peg.3226"/>
<dbReference type="eggNOG" id="COG3158">
    <property type="taxonomic scope" value="Bacteria"/>
</dbReference>
<dbReference type="HOGENOM" id="CLU_008142_4_2_6"/>
<dbReference type="OrthoDB" id="9805577at2"/>
<dbReference type="Proteomes" id="UP000001010">
    <property type="component" value="Chromosome"/>
</dbReference>
<dbReference type="GO" id="GO:0016020">
    <property type="term" value="C:membrane"/>
    <property type="evidence" value="ECO:0000318"/>
    <property type="project" value="GO_Central"/>
</dbReference>
<dbReference type="GO" id="GO:0005886">
    <property type="term" value="C:plasma membrane"/>
    <property type="evidence" value="ECO:0007669"/>
    <property type="project" value="UniProtKB-SubCell"/>
</dbReference>
<dbReference type="GO" id="GO:0015079">
    <property type="term" value="F:potassium ion transmembrane transporter activity"/>
    <property type="evidence" value="ECO:0000318"/>
    <property type="project" value="GO_Central"/>
</dbReference>
<dbReference type="GO" id="GO:0015293">
    <property type="term" value="F:symporter activity"/>
    <property type="evidence" value="ECO:0007669"/>
    <property type="project" value="UniProtKB-UniRule"/>
</dbReference>
<dbReference type="GO" id="GO:0006813">
    <property type="term" value="P:potassium ion transport"/>
    <property type="evidence" value="ECO:0000318"/>
    <property type="project" value="GO_Central"/>
</dbReference>
<dbReference type="HAMAP" id="MF_01522">
    <property type="entry name" value="Kup"/>
    <property type="match status" value="1"/>
</dbReference>
<dbReference type="InterPro" id="IPR003855">
    <property type="entry name" value="K+_transporter"/>
</dbReference>
<dbReference type="InterPro" id="IPR053952">
    <property type="entry name" value="K_trans_C"/>
</dbReference>
<dbReference type="InterPro" id="IPR053951">
    <property type="entry name" value="K_trans_N"/>
</dbReference>
<dbReference type="InterPro" id="IPR023051">
    <property type="entry name" value="Kup"/>
</dbReference>
<dbReference type="PANTHER" id="PTHR30540:SF79">
    <property type="entry name" value="LOW AFFINITY POTASSIUM TRANSPORT SYSTEM PROTEIN KUP"/>
    <property type="match status" value="1"/>
</dbReference>
<dbReference type="PANTHER" id="PTHR30540">
    <property type="entry name" value="OSMOTIC STRESS POTASSIUM TRANSPORTER"/>
    <property type="match status" value="1"/>
</dbReference>
<dbReference type="Pfam" id="PF02705">
    <property type="entry name" value="K_trans"/>
    <property type="match status" value="1"/>
</dbReference>
<dbReference type="Pfam" id="PF22776">
    <property type="entry name" value="K_trans_C"/>
    <property type="match status" value="1"/>
</dbReference>
<sequence length="635" mass="69712">MSHTPTPAAGSGHAPANGHMALVIGAIGVVFGDIGTSPLYTLKEAFSPHYGLTSDHDTVLGVLSLAFWALMITVTLKYVTIIMRADNEGEGGIMALMALTQRTLKQGSRSAYVVGILGIFGASLFFGDGVITPAISVMGAVEGLEIAAPSLHPFIVPITVVVLLVVFMVQRFGTEKVGKVFGPITCLWFLSLGAIGIWNIVDAPEVLKAFNPWWAIRFFMEHGWHGVFILGAVVLAVTGGEALYADMGHFGARPIRHGWYFFVLPMLLLNYLGQGALVLNHPAALKNPFFEAVPSWALYPMIILATLAAVIASQAVITGAYSVARQAMQLGYIPRMLIKHTSRDTIGQIYVPGINWLLMVMVIALVLIFRSSTNLAVAYGISVSMTMLIDTLLLALVARSLWPRWRNWVLPLCVVFFIIELAFVIANGAKLLQGAWFPLALGIVVFTLMRTWRRGRALLREEIRKDGIRIDSFLPGLMLAPPARVPGMAVFLTADPMVVPHALMHNLKHNKVLHERNIFLNVDTLPIPYAPADKRLQIESIGDEFYRVYVRFGFMETPDVPLALMRSCDQGGIHFDPMDTTFFASRETIVASANRGMPIWRDKLFALMHRNAAPATGFFRIPGNRLVELGAQVEI</sequence>
<comment type="function">
    <text evidence="1">Transport of potassium into the cell. Likely operates as a K(+):H(+) symporter.</text>
</comment>
<comment type="catalytic activity">
    <reaction evidence="1">
        <text>K(+)(in) + H(+)(in) = K(+)(out) + H(+)(out)</text>
        <dbReference type="Rhea" id="RHEA:28490"/>
        <dbReference type="ChEBI" id="CHEBI:15378"/>
        <dbReference type="ChEBI" id="CHEBI:29103"/>
    </reaction>
    <physiologicalReaction direction="right-to-left" evidence="1">
        <dbReference type="Rhea" id="RHEA:28492"/>
    </physiologicalReaction>
</comment>
<comment type="subcellular location">
    <subcellularLocation>
        <location evidence="1">Cell inner membrane</location>
        <topology evidence="1">Multi-pass membrane protein</topology>
    </subcellularLocation>
</comment>
<comment type="similarity">
    <text evidence="1">Belongs to the HAK/KUP transporter (TC 2.A.72) family.</text>
</comment>
<reference key="1">
    <citation type="journal article" date="2002" name="Nature">
        <title>Comparison of the genomes of two Xanthomonas pathogens with differing host specificities.</title>
        <authorList>
            <person name="da Silva A.C.R."/>
            <person name="Ferro J.A."/>
            <person name="Reinach F.C."/>
            <person name="Farah C.S."/>
            <person name="Furlan L.R."/>
            <person name="Quaggio R.B."/>
            <person name="Monteiro-Vitorello C.B."/>
            <person name="Van Sluys M.A."/>
            <person name="Almeida N.F. Jr."/>
            <person name="Alves L.M.C."/>
            <person name="do Amaral A.M."/>
            <person name="Bertolini M.C."/>
            <person name="Camargo L.E.A."/>
            <person name="Camarotte G."/>
            <person name="Cannavan F."/>
            <person name="Cardozo J."/>
            <person name="Chambergo F."/>
            <person name="Ciapina L.P."/>
            <person name="Cicarelli R.M.B."/>
            <person name="Coutinho L.L."/>
            <person name="Cursino-Santos J.R."/>
            <person name="El-Dorry H."/>
            <person name="Faria J.B."/>
            <person name="Ferreira A.J.S."/>
            <person name="Ferreira R.C.C."/>
            <person name="Ferro M.I.T."/>
            <person name="Formighieri E.F."/>
            <person name="Franco M.C."/>
            <person name="Greggio C.C."/>
            <person name="Gruber A."/>
            <person name="Katsuyama A.M."/>
            <person name="Kishi L.T."/>
            <person name="Leite R.P."/>
            <person name="Lemos E.G.M."/>
            <person name="Lemos M.V.F."/>
            <person name="Locali E.C."/>
            <person name="Machado M.A."/>
            <person name="Madeira A.M.B.N."/>
            <person name="Martinez-Rossi N.M."/>
            <person name="Martins E.C."/>
            <person name="Meidanis J."/>
            <person name="Menck C.F.M."/>
            <person name="Miyaki C.Y."/>
            <person name="Moon D.H."/>
            <person name="Moreira L.M."/>
            <person name="Novo M.T.M."/>
            <person name="Okura V.K."/>
            <person name="Oliveira M.C."/>
            <person name="Oliveira V.R."/>
            <person name="Pereira H.A."/>
            <person name="Rossi A."/>
            <person name="Sena J.A.D."/>
            <person name="Silva C."/>
            <person name="de Souza R.F."/>
            <person name="Spinola L.A.F."/>
            <person name="Takita M.A."/>
            <person name="Tamura R.E."/>
            <person name="Teixeira E.C."/>
            <person name="Tezza R.I.D."/>
            <person name="Trindade dos Santos M."/>
            <person name="Truffi D."/>
            <person name="Tsai S.M."/>
            <person name="White F.F."/>
            <person name="Setubal J.C."/>
            <person name="Kitajima J.P."/>
        </authorList>
    </citation>
    <scope>NUCLEOTIDE SEQUENCE [LARGE SCALE GENOMIC DNA]</scope>
    <source>
        <strain>ATCC 33913 / DSM 3586 / NCPPB 528 / LMG 568 / P 25</strain>
    </source>
</reference>
<proteinExistence type="inferred from homology"/>
<name>KUP_XANCP</name>
<protein>
    <recommendedName>
        <fullName evidence="1">Probable potassium transport system protein Kup</fullName>
    </recommendedName>
</protein>
<accession>Q8P6E6</accession>
<feature type="chain" id="PRO_0000209069" description="Probable potassium transport system protein Kup">
    <location>
        <begin position="1"/>
        <end position="635"/>
    </location>
</feature>
<feature type="transmembrane region" description="Helical" evidence="1">
    <location>
        <begin position="20"/>
        <end position="40"/>
    </location>
</feature>
<feature type="transmembrane region" description="Helical" evidence="1">
    <location>
        <begin position="62"/>
        <end position="82"/>
    </location>
</feature>
<feature type="transmembrane region" description="Helical" evidence="1">
    <location>
        <begin position="111"/>
        <end position="131"/>
    </location>
</feature>
<feature type="transmembrane region" description="Helical" evidence="1">
    <location>
        <begin position="149"/>
        <end position="169"/>
    </location>
</feature>
<feature type="transmembrane region" description="Helical" evidence="1">
    <location>
        <begin position="180"/>
        <end position="200"/>
    </location>
</feature>
<feature type="transmembrane region" description="Helical" evidence="1">
    <location>
        <begin position="223"/>
        <end position="243"/>
    </location>
</feature>
<feature type="transmembrane region" description="Helical" evidence="1">
    <location>
        <begin position="259"/>
        <end position="279"/>
    </location>
</feature>
<feature type="transmembrane region" description="Helical" evidence="1">
    <location>
        <begin position="292"/>
        <end position="312"/>
    </location>
</feature>
<feature type="transmembrane region" description="Helical" evidence="1">
    <location>
        <begin position="349"/>
        <end position="369"/>
    </location>
</feature>
<feature type="transmembrane region" description="Helical" evidence="1">
    <location>
        <begin position="377"/>
        <end position="397"/>
    </location>
</feature>
<feature type="transmembrane region" description="Helical" evidence="1">
    <location>
        <begin position="408"/>
        <end position="428"/>
    </location>
</feature>
<feature type="transmembrane region" description="Helical" evidence="1">
    <location>
        <begin position="429"/>
        <end position="449"/>
    </location>
</feature>